<comment type="function">
    <text evidence="3 4 5 6 7">Controls the morphogenesis of lateral organs. Functions in lateral organ shape and is sufficient to induce proliferation and growth of lateral organ tissue. Is necessary and sufficient for bract formation, but its expression is excluded from the cryptic bract, which could be a cause of bractless flowers in Arabidopsis. Participates with FIL and YAB3 in regulating valve margin development. Functions with JGL to define stamen and carpel shape. Functions with AS1 and AS2 in the sepal and petal primordia to repress boundary-specifying genes for normal development of the organs.</text>
</comment>
<comment type="subunit">
    <text evidence="8">Interacts with GATA18/HAN.</text>
</comment>
<comment type="subcellular location">
    <subcellularLocation>
        <location evidence="3 4">Nucleus</location>
    </subcellularLocation>
</comment>
<comment type="tissue specificity">
    <text evidence="3 4 8">Expressed in the emerging leaf, sepal, petal, stamen and carpel primordia (PubMed:26390296). Not expressed in the apical shoot meristem (SAM).</text>
</comment>
<comment type="induction">
    <text evidence="8">Stimulated by GATA18/HAN.</text>
</comment>
<comment type="disruption phenotype">
    <text evidence="3 4 8">Lateral organs with serrated margins. Irregular shape of floral organs. The double mutant han-2 jag-3 exhibits reduced petal numbers, more serrated sepals and narrower petals (PubMed:26390296).</text>
</comment>
<comment type="miscellaneous">
    <text>Plants overexpressing JAG form bract-like organs on the inflorescence.</text>
</comment>
<comment type="sequence caution" evidence="9">
    <conflict type="erroneous gene model prediction">
        <sequence resource="EMBL-CDS" id="AAG52397"/>
    </conflict>
</comment>
<reference key="1">
    <citation type="journal article" date="2004" name="Development">
        <title>The role of JAGGED in shaping lateral organs.</title>
        <authorList>
            <person name="Dinneny J.R."/>
            <person name="Yadegari R."/>
            <person name="Fischer R.L."/>
            <person name="Yanofsky M.F."/>
            <person name="Weigel D."/>
        </authorList>
    </citation>
    <scope>NUCLEOTIDE SEQUENCE [MRNA]</scope>
    <scope>FUNCTION</scope>
    <scope>SUBCELLULAR LOCATION</scope>
    <scope>TISSUE SPECIFICITY</scope>
    <scope>DISRUPTION PHENOTYPE</scope>
    <source>
        <strain>cv. Columbia</strain>
    </source>
</reference>
<reference key="2">
    <citation type="journal article" date="2000" name="Nature">
        <title>Sequence and analysis of chromosome 1 of the plant Arabidopsis thaliana.</title>
        <authorList>
            <person name="Theologis A."/>
            <person name="Ecker J.R."/>
            <person name="Palm C.J."/>
            <person name="Federspiel N.A."/>
            <person name="Kaul S."/>
            <person name="White O."/>
            <person name="Alonso J."/>
            <person name="Altafi H."/>
            <person name="Araujo R."/>
            <person name="Bowman C.L."/>
            <person name="Brooks S.Y."/>
            <person name="Buehler E."/>
            <person name="Chan A."/>
            <person name="Chao Q."/>
            <person name="Chen H."/>
            <person name="Cheuk R.F."/>
            <person name="Chin C.W."/>
            <person name="Chung M.K."/>
            <person name="Conn L."/>
            <person name="Conway A.B."/>
            <person name="Conway A.R."/>
            <person name="Creasy T.H."/>
            <person name="Dewar K."/>
            <person name="Dunn P."/>
            <person name="Etgu P."/>
            <person name="Feldblyum T.V."/>
            <person name="Feng J.-D."/>
            <person name="Fong B."/>
            <person name="Fujii C.Y."/>
            <person name="Gill J.E."/>
            <person name="Goldsmith A.D."/>
            <person name="Haas B."/>
            <person name="Hansen N.F."/>
            <person name="Hughes B."/>
            <person name="Huizar L."/>
            <person name="Hunter J.L."/>
            <person name="Jenkins J."/>
            <person name="Johnson-Hopson C."/>
            <person name="Khan S."/>
            <person name="Khaykin E."/>
            <person name="Kim C.J."/>
            <person name="Koo H.L."/>
            <person name="Kremenetskaia I."/>
            <person name="Kurtz D.B."/>
            <person name="Kwan A."/>
            <person name="Lam B."/>
            <person name="Langin-Hooper S."/>
            <person name="Lee A."/>
            <person name="Lee J.M."/>
            <person name="Lenz C.A."/>
            <person name="Li J.H."/>
            <person name="Li Y.-P."/>
            <person name="Lin X."/>
            <person name="Liu S.X."/>
            <person name="Liu Z.A."/>
            <person name="Luros J.S."/>
            <person name="Maiti R."/>
            <person name="Marziali A."/>
            <person name="Militscher J."/>
            <person name="Miranda M."/>
            <person name="Nguyen M."/>
            <person name="Nierman W.C."/>
            <person name="Osborne B.I."/>
            <person name="Pai G."/>
            <person name="Peterson J."/>
            <person name="Pham P.K."/>
            <person name="Rizzo M."/>
            <person name="Rooney T."/>
            <person name="Rowley D."/>
            <person name="Sakano H."/>
            <person name="Salzberg S.L."/>
            <person name="Schwartz J.R."/>
            <person name="Shinn P."/>
            <person name="Southwick A.M."/>
            <person name="Sun H."/>
            <person name="Tallon L.J."/>
            <person name="Tambunga G."/>
            <person name="Toriumi M.J."/>
            <person name="Town C.D."/>
            <person name="Utterback T."/>
            <person name="Van Aken S."/>
            <person name="Vaysberg M."/>
            <person name="Vysotskaia V.S."/>
            <person name="Walker M."/>
            <person name="Wu D."/>
            <person name="Yu G."/>
            <person name="Fraser C.M."/>
            <person name="Venter J.C."/>
            <person name="Davis R.W."/>
        </authorList>
    </citation>
    <scope>NUCLEOTIDE SEQUENCE [LARGE SCALE GENOMIC DNA]</scope>
    <source>
        <strain>cv. Columbia</strain>
    </source>
</reference>
<reference key="3">
    <citation type="journal article" date="2017" name="Plant J.">
        <title>Araport11: a complete reannotation of the Arabidopsis thaliana reference genome.</title>
        <authorList>
            <person name="Cheng C.Y."/>
            <person name="Krishnakumar V."/>
            <person name="Chan A.P."/>
            <person name="Thibaud-Nissen F."/>
            <person name="Schobel S."/>
            <person name="Town C.D."/>
        </authorList>
    </citation>
    <scope>GENOME REANNOTATION</scope>
    <source>
        <strain>cv. Columbia</strain>
    </source>
</reference>
<reference key="4">
    <citation type="journal article" date="2004" name="Development">
        <title>The Arabidopsis JAGGED gene encodes a zinc finger protein that promotes leaf tissue development.</title>
        <authorList>
            <person name="Ohno C.K."/>
            <person name="Reddy G.V."/>
            <person name="Heisler M.G."/>
            <person name="Meyerowitz E.M."/>
        </authorList>
    </citation>
    <scope>FUNCTION</scope>
    <scope>SUBCELLULAR LOCATION</scope>
    <scope>TISSUE SPECIFICITY</scope>
    <scope>DISRUPTION PHENOTYPE</scope>
</reference>
<reference key="5">
    <citation type="journal article" date="2005" name="Development">
        <title>A genetic framework for fruit patterning in Arabidopsis thaliana.</title>
        <authorList>
            <person name="Dinneny J.R."/>
            <person name="Weigel D."/>
            <person name="Yanofsky M.F."/>
        </authorList>
    </citation>
    <scope>FUNCTION</scope>
</reference>
<reference key="6">
    <citation type="journal article" date="2006" name="Development">
        <title>NUBBIN and JAGGED define stamen and carpel shape in Arabidopsis.</title>
        <authorList>
            <person name="Dinneny J.R."/>
            <person name="Weigel D."/>
            <person name="Yanofsky M.F."/>
        </authorList>
    </citation>
    <scope>FUNCTION</scope>
</reference>
<reference key="7">
    <citation type="journal article" date="2008" name="Plant Physiol.">
        <title>Arabidopsis genes AS1, AS2, and JAG negatively regulate boundary-specifying genes to promote sepal and petal development.</title>
        <authorList>
            <person name="Xu B."/>
            <person name="Li Z."/>
            <person name="Zhu Y."/>
            <person name="Wang H."/>
            <person name="Ma H."/>
            <person name="Dong A."/>
            <person name="Huang H."/>
        </authorList>
    </citation>
    <scope>FUNCTION</scope>
</reference>
<reference key="8">
    <citation type="journal article" date="2015" name="PLoS Genet.">
        <title>HANABA TARANU (HAN) bridges meristem and organ primordia boundaries through PINHEAD, JAGGED, BLADE-ON-PETIOLE2 and CYTOKININ OXIDASE 3 during flower development in Arabidopsis.</title>
        <authorList>
            <person name="Ding L."/>
            <person name="Yan S."/>
            <person name="Jiang L."/>
            <person name="Zhao W."/>
            <person name="Ning K."/>
            <person name="Zhao J."/>
            <person name="Liu X."/>
            <person name="Zhang J."/>
            <person name="Wang Q."/>
            <person name="Zhang X."/>
        </authorList>
    </citation>
    <scope>INTERACTION WITH GATA18/HAN</scope>
    <scope>DISRUPTION PHENOTYPE</scope>
    <scope>INDUCTION BY GATA18/HAN</scope>
    <scope>TISSUE SPECIFICITY</scope>
</reference>
<feature type="chain" id="PRO_0000407988" description="Zinc finger protein JAGGED">
    <location>
        <begin position="1"/>
        <end position="253"/>
    </location>
</feature>
<feature type="zinc finger region" description="C2H2-type" evidence="1">
    <location>
        <begin position="51"/>
        <end position="73"/>
    </location>
</feature>
<feature type="region of interest" description="Disordered" evidence="2">
    <location>
        <begin position="1"/>
        <end position="46"/>
    </location>
</feature>
<feature type="compositionally biased region" description="Basic and acidic residues" evidence="2">
    <location>
        <begin position="16"/>
        <end position="26"/>
    </location>
</feature>
<accession>Q6S591</accession>
<accession>Q9CA33</accession>
<keyword id="KW-0217">Developmental protein</keyword>
<keyword id="KW-0221">Differentiation</keyword>
<keyword id="KW-0479">Metal-binding</keyword>
<keyword id="KW-0539">Nucleus</keyword>
<keyword id="KW-1185">Reference proteome</keyword>
<keyword id="KW-0862">Zinc</keyword>
<keyword id="KW-0863">Zinc-finger</keyword>
<protein>
    <recommendedName>
        <fullName>Zinc finger protein JAGGED</fullName>
    </recommendedName>
</protein>
<name>JAG_ARATH</name>
<organism>
    <name type="scientific">Arabidopsis thaliana</name>
    <name type="common">Mouse-ear cress</name>
    <dbReference type="NCBI Taxonomy" id="3702"/>
    <lineage>
        <taxon>Eukaryota</taxon>
        <taxon>Viridiplantae</taxon>
        <taxon>Streptophyta</taxon>
        <taxon>Embryophyta</taxon>
        <taxon>Tracheophyta</taxon>
        <taxon>Spermatophyta</taxon>
        <taxon>Magnoliopsida</taxon>
        <taxon>eudicotyledons</taxon>
        <taxon>Gunneridae</taxon>
        <taxon>Pentapetalae</taxon>
        <taxon>rosids</taxon>
        <taxon>malvids</taxon>
        <taxon>Brassicales</taxon>
        <taxon>Brassicaceae</taxon>
        <taxon>Camelineae</taxon>
        <taxon>Arabidopsis</taxon>
    </lineage>
</organism>
<evidence type="ECO:0000255" key="1">
    <source>
        <dbReference type="PROSITE-ProRule" id="PRU00042"/>
    </source>
</evidence>
<evidence type="ECO:0000256" key="2">
    <source>
        <dbReference type="SAM" id="MobiDB-lite"/>
    </source>
</evidence>
<evidence type="ECO:0000269" key="3">
    <source>
    </source>
</evidence>
<evidence type="ECO:0000269" key="4">
    <source>
    </source>
</evidence>
<evidence type="ECO:0000269" key="5">
    <source>
    </source>
</evidence>
<evidence type="ECO:0000269" key="6">
    <source>
    </source>
</evidence>
<evidence type="ECO:0000269" key="7">
    <source>
    </source>
</evidence>
<evidence type="ECO:0000269" key="8">
    <source>
    </source>
</evidence>
<evidence type="ECO:0000305" key="9"/>
<proteinExistence type="evidence at protein level"/>
<gene>
    <name type="primary">JAG</name>
    <name type="ordered locus">At1g68480</name>
    <name type="ORF">T26J14.5</name>
</gene>
<dbReference type="EMBL" id="AY465924">
    <property type="protein sequence ID" value="AAR30036.1"/>
    <property type="molecule type" value="mRNA"/>
</dbReference>
<dbReference type="EMBL" id="AC011915">
    <property type="protein sequence ID" value="AAG52397.1"/>
    <property type="status" value="ALT_SEQ"/>
    <property type="molecule type" value="Genomic_DNA"/>
</dbReference>
<dbReference type="EMBL" id="CP002684">
    <property type="protein sequence ID" value="AEE34798.1"/>
    <property type="molecule type" value="Genomic_DNA"/>
</dbReference>
<dbReference type="PIR" id="H96708">
    <property type="entry name" value="H96708"/>
</dbReference>
<dbReference type="RefSeq" id="NP_177015.3">
    <property type="nucleotide sequence ID" value="NM_105519.4"/>
</dbReference>
<dbReference type="SMR" id="Q6S591"/>
<dbReference type="BioGRID" id="28398">
    <property type="interactions" value="5"/>
</dbReference>
<dbReference type="FunCoup" id="Q6S591">
    <property type="interactions" value="3"/>
</dbReference>
<dbReference type="IntAct" id="Q6S591">
    <property type="interactions" value="13"/>
</dbReference>
<dbReference type="STRING" id="3702.Q6S591"/>
<dbReference type="GlyGen" id="Q6S591">
    <property type="glycosylation" value="1 site"/>
</dbReference>
<dbReference type="PaxDb" id="3702-AT1G68480.1"/>
<dbReference type="ProteomicsDB" id="232253"/>
<dbReference type="EnsemblPlants" id="AT1G68480.1">
    <property type="protein sequence ID" value="AT1G68480.1"/>
    <property type="gene ID" value="AT1G68480"/>
</dbReference>
<dbReference type="GeneID" id="843177"/>
<dbReference type="Gramene" id="AT1G68480.1">
    <property type="protein sequence ID" value="AT1G68480.1"/>
    <property type="gene ID" value="AT1G68480"/>
</dbReference>
<dbReference type="KEGG" id="ath:AT1G68480"/>
<dbReference type="Araport" id="AT1G68480"/>
<dbReference type="TAIR" id="AT1G68480">
    <property type="gene designation" value="JAG"/>
</dbReference>
<dbReference type="eggNOG" id="ENOG502QUI4">
    <property type="taxonomic scope" value="Eukaryota"/>
</dbReference>
<dbReference type="HOGENOM" id="CLU_062933_0_0_1"/>
<dbReference type="InParanoid" id="Q6S591"/>
<dbReference type="OMA" id="MNDYYVG"/>
<dbReference type="PhylomeDB" id="Q6S591"/>
<dbReference type="PRO" id="PR:Q6S591"/>
<dbReference type="Proteomes" id="UP000006548">
    <property type="component" value="Chromosome 1"/>
</dbReference>
<dbReference type="ExpressionAtlas" id="Q6S591">
    <property type="expression patterns" value="baseline and differential"/>
</dbReference>
<dbReference type="GO" id="GO:0005634">
    <property type="term" value="C:nucleus"/>
    <property type="evidence" value="ECO:0000314"/>
    <property type="project" value="TAIR"/>
</dbReference>
<dbReference type="GO" id="GO:0003700">
    <property type="term" value="F:DNA-binding transcription factor activity"/>
    <property type="evidence" value="ECO:0000250"/>
    <property type="project" value="TAIR"/>
</dbReference>
<dbReference type="GO" id="GO:0008270">
    <property type="term" value="F:zinc ion binding"/>
    <property type="evidence" value="ECO:0007669"/>
    <property type="project" value="UniProtKB-KW"/>
</dbReference>
<dbReference type="GO" id="GO:0010158">
    <property type="term" value="P:abaxial cell fate specification"/>
    <property type="evidence" value="ECO:0000315"/>
    <property type="project" value="TAIR"/>
</dbReference>
<dbReference type="GO" id="GO:0048653">
    <property type="term" value="P:anther development"/>
    <property type="evidence" value="ECO:0000316"/>
    <property type="project" value="TAIR"/>
</dbReference>
<dbReference type="GO" id="GO:0048440">
    <property type="term" value="P:carpel development"/>
    <property type="evidence" value="ECO:0000316"/>
    <property type="project" value="TAIR"/>
</dbReference>
<dbReference type="GO" id="GO:0009908">
    <property type="term" value="P:flower development"/>
    <property type="evidence" value="ECO:0000315"/>
    <property type="project" value="TAIR"/>
</dbReference>
<dbReference type="GO" id="GO:0009965">
    <property type="term" value="P:leaf morphogenesis"/>
    <property type="evidence" value="ECO:0000315"/>
    <property type="project" value="TAIR"/>
</dbReference>
<dbReference type="GO" id="GO:0009909">
    <property type="term" value="P:regulation of flower development"/>
    <property type="evidence" value="ECO:0000315"/>
    <property type="project" value="UniProtKB"/>
</dbReference>
<dbReference type="GO" id="GO:0010093">
    <property type="term" value="P:specification of floral organ identity"/>
    <property type="evidence" value="ECO:0000315"/>
    <property type="project" value="TAIR"/>
</dbReference>
<dbReference type="GO" id="GO:0048443">
    <property type="term" value="P:stamen development"/>
    <property type="evidence" value="ECO:0000316"/>
    <property type="project" value="TAIR"/>
</dbReference>
<dbReference type="FunFam" id="3.30.160.60:FF:002425">
    <property type="entry name" value="Zinc finger protein STAMENLESS 1"/>
    <property type="match status" value="1"/>
</dbReference>
<dbReference type="Gene3D" id="3.30.160.60">
    <property type="entry name" value="Classic Zinc Finger"/>
    <property type="match status" value="1"/>
</dbReference>
<dbReference type="InterPro" id="IPR045320">
    <property type="entry name" value="JAGGED/SL1-like"/>
</dbReference>
<dbReference type="InterPro" id="IPR036236">
    <property type="entry name" value="Znf_C2H2_sf"/>
</dbReference>
<dbReference type="InterPro" id="IPR013087">
    <property type="entry name" value="Znf_C2H2_type"/>
</dbReference>
<dbReference type="PANTHER" id="PTHR45730">
    <property type="entry name" value="ZINC FINGER PROTEIN JAGGED"/>
    <property type="match status" value="1"/>
</dbReference>
<dbReference type="PANTHER" id="PTHR45730:SF32">
    <property type="entry name" value="ZINC FINGER PROTEIN JAGGED"/>
    <property type="match status" value="1"/>
</dbReference>
<dbReference type="SUPFAM" id="SSF57667">
    <property type="entry name" value="beta-beta-alpha zinc fingers"/>
    <property type="match status" value="1"/>
</dbReference>
<dbReference type="PROSITE" id="PS00028">
    <property type="entry name" value="ZINC_FINGER_C2H2_1"/>
    <property type="match status" value="1"/>
</dbReference>
<dbReference type="PROSITE" id="PS50157">
    <property type="entry name" value="ZINC_FINGER_C2H2_2"/>
    <property type="match status" value="1"/>
</dbReference>
<sequence length="253" mass="28379">MRHEENYLDLNNLPDDFSKDGNKQALEEGSSSGQRKKKGSKEGKDESGKVYECRFCSLKFCKSQALGGHMNRHRQERETETLNQARQLVYRNDTITPPGISPFGYHHTTDPTIYRSVYSSPMIYPGSSSTNLVPQPPMPPPPPPYPYSSNQYSPHNHFNDYYLNPSFRGSRSISPSPNLPTTTTVDYMADSPVEPGYTCVGAPIGPTGFPIRGPSIVRAPLEPPQGRDGDASRQRLDHSLRFPINRFQDHHSL</sequence>